<protein>
    <recommendedName>
        <fullName>Prenylcysteine oxidase 1-like</fullName>
        <ecNumber>1.8.3.-</ecNumber>
    </recommendedName>
</protein>
<sequence>MARAAPLLAVLATVLTTAAAGGDAPPGKIAVIGAGIGGSAVAHFLQQHFGPRVQIVVYEKGTVGGRLATISVNKQNYESGAASFHSLSLHMQDFVKLLGLRQRREVVGRSAIFGGEHFVLEETDWYLLNLFRLWWYYGISFLRLQMWVEEVMEKFMRIYKYQAHGYAFSGVEELLYSLGEATFVNMTQRSVAESLLQVGVTQRFIDDVVSAVLRASYGQSASMPAFAGAMSLAGAQGNLWSVEGGNKLVCSGLLKLAKATVIHATVTSVTLHSTEGKALYQVAYESDKGNSSDFYDIVVIATPLHLDNSSNNNITFEGFTPPIEDIQGSFQPTVVSLVHGYLNSSYFGFPDPKLFPFANILTTDFPSFFCTLDNICPVNISASFRRKQPQEAAVWRVQSPKPLFRTELKTLFRSYYSVQTAEWQAHPLYGSRRTLPRFALHDQLFYLNALEWAASSVEVTAVAAKNVALLAYNRWYQDLDKIDQKDLIHKVKTEL</sequence>
<comment type="function">
    <text evidence="4 5">Likely to have oxidoreductase activity (Probable). Required in the mevalonate pathway to regulate prenylation and enhances the bactericidal activity of neutrophils (PubMed:37179332).</text>
</comment>
<comment type="cofactor">
    <cofactor evidence="2">
        <name>FAD</name>
        <dbReference type="ChEBI" id="CHEBI:57692"/>
    </cofactor>
</comment>
<comment type="subcellular location">
    <subcellularLocation>
        <location evidence="5">Secreted</location>
    </subcellularLocation>
</comment>
<comment type="disruption phenotype">
    <text evidence="4">Increased susceptibility to ocular infection by the Gram-negative bacterium Pseudomonas aeruginosa with increased corneal opacity, hemorrhaging and higher corneal bacterial burden despite increased neutrophil infiltration.</text>
</comment>
<comment type="similarity">
    <text evidence="5">Belongs to the prenylcysteine oxidase family.</text>
</comment>
<name>PCYXL_MOUSE</name>
<gene>
    <name type="primary">Pcyox1l</name>
</gene>
<feature type="signal peptide" evidence="1">
    <location>
        <begin position="1"/>
        <end position="22"/>
    </location>
</feature>
<feature type="chain" id="PRO_0000280287" description="Prenylcysteine oxidase 1-like">
    <location>
        <begin position="23"/>
        <end position="495"/>
    </location>
</feature>
<feature type="glycosylation site" description="N-linked (GlcNAc...) asparagine" evidence="3">
    <location>
        <position position="185"/>
    </location>
</feature>
<feature type="glycosylation site" description="N-linked (GlcNAc...) asparagine" evidence="3">
    <location>
        <position position="343"/>
    </location>
</feature>
<accession>Q8C7K6</accession>
<organism>
    <name type="scientific">Mus musculus</name>
    <name type="common">Mouse</name>
    <dbReference type="NCBI Taxonomy" id="10090"/>
    <lineage>
        <taxon>Eukaryota</taxon>
        <taxon>Metazoa</taxon>
        <taxon>Chordata</taxon>
        <taxon>Craniata</taxon>
        <taxon>Vertebrata</taxon>
        <taxon>Euteleostomi</taxon>
        <taxon>Mammalia</taxon>
        <taxon>Eutheria</taxon>
        <taxon>Euarchontoglires</taxon>
        <taxon>Glires</taxon>
        <taxon>Rodentia</taxon>
        <taxon>Myomorpha</taxon>
        <taxon>Muroidea</taxon>
        <taxon>Muridae</taxon>
        <taxon>Murinae</taxon>
        <taxon>Mus</taxon>
        <taxon>Mus</taxon>
    </lineage>
</organism>
<reference key="1">
    <citation type="journal article" date="2005" name="Science">
        <title>The transcriptional landscape of the mammalian genome.</title>
        <authorList>
            <person name="Carninci P."/>
            <person name="Kasukawa T."/>
            <person name="Katayama S."/>
            <person name="Gough J."/>
            <person name="Frith M.C."/>
            <person name="Maeda N."/>
            <person name="Oyama R."/>
            <person name="Ravasi T."/>
            <person name="Lenhard B."/>
            <person name="Wells C."/>
            <person name="Kodzius R."/>
            <person name="Shimokawa K."/>
            <person name="Bajic V.B."/>
            <person name="Brenner S.E."/>
            <person name="Batalov S."/>
            <person name="Forrest A.R."/>
            <person name="Zavolan M."/>
            <person name="Davis M.J."/>
            <person name="Wilming L.G."/>
            <person name="Aidinis V."/>
            <person name="Allen J.E."/>
            <person name="Ambesi-Impiombato A."/>
            <person name="Apweiler R."/>
            <person name="Aturaliya R.N."/>
            <person name="Bailey T.L."/>
            <person name="Bansal M."/>
            <person name="Baxter L."/>
            <person name="Beisel K.W."/>
            <person name="Bersano T."/>
            <person name="Bono H."/>
            <person name="Chalk A.M."/>
            <person name="Chiu K.P."/>
            <person name="Choudhary V."/>
            <person name="Christoffels A."/>
            <person name="Clutterbuck D.R."/>
            <person name="Crowe M.L."/>
            <person name="Dalla E."/>
            <person name="Dalrymple B.P."/>
            <person name="de Bono B."/>
            <person name="Della Gatta G."/>
            <person name="di Bernardo D."/>
            <person name="Down T."/>
            <person name="Engstrom P."/>
            <person name="Fagiolini M."/>
            <person name="Faulkner G."/>
            <person name="Fletcher C.F."/>
            <person name="Fukushima T."/>
            <person name="Furuno M."/>
            <person name="Futaki S."/>
            <person name="Gariboldi M."/>
            <person name="Georgii-Hemming P."/>
            <person name="Gingeras T.R."/>
            <person name="Gojobori T."/>
            <person name="Green R.E."/>
            <person name="Gustincich S."/>
            <person name="Harbers M."/>
            <person name="Hayashi Y."/>
            <person name="Hensch T.K."/>
            <person name="Hirokawa N."/>
            <person name="Hill D."/>
            <person name="Huminiecki L."/>
            <person name="Iacono M."/>
            <person name="Ikeo K."/>
            <person name="Iwama A."/>
            <person name="Ishikawa T."/>
            <person name="Jakt M."/>
            <person name="Kanapin A."/>
            <person name="Katoh M."/>
            <person name="Kawasawa Y."/>
            <person name="Kelso J."/>
            <person name="Kitamura H."/>
            <person name="Kitano H."/>
            <person name="Kollias G."/>
            <person name="Krishnan S.P."/>
            <person name="Kruger A."/>
            <person name="Kummerfeld S.K."/>
            <person name="Kurochkin I.V."/>
            <person name="Lareau L.F."/>
            <person name="Lazarevic D."/>
            <person name="Lipovich L."/>
            <person name="Liu J."/>
            <person name="Liuni S."/>
            <person name="McWilliam S."/>
            <person name="Madan Babu M."/>
            <person name="Madera M."/>
            <person name="Marchionni L."/>
            <person name="Matsuda H."/>
            <person name="Matsuzawa S."/>
            <person name="Miki H."/>
            <person name="Mignone F."/>
            <person name="Miyake S."/>
            <person name="Morris K."/>
            <person name="Mottagui-Tabar S."/>
            <person name="Mulder N."/>
            <person name="Nakano N."/>
            <person name="Nakauchi H."/>
            <person name="Ng P."/>
            <person name="Nilsson R."/>
            <person name="Nishiguchi S."/>
            <person name="Nishikawa S."/>
            <person name="Nori F."/>
            <person name="Ohara O."/>
            <person name="Okazaki Y."/>
            <person name="Orlando V."/>
            <person name="Pang K.C."/>
            <person name="Pavan W.J."/>
            <person name="Pavesi G."/>
            <person name="Pesole G."/>
            <person name="Petrovsky N."/>
            <person name="Piazza S."/>
            <person name="Reed J."/>
            <person name="Reid J.F."/>
            <person name="Ring B.Z."/>
            <person name="Ringwald M."/>
            <person name="Rost B."/>
            <person name="Ruan Y."/>
            <person name="Salzberg S.L."/>
            <person name="Sandelin A."/>
            <person name="Schneider C."/>
            <person name="Schoenbach C."/>
            <person name="Sekiguchi K."/>
            <person name="Semple C.A."/>
            <person name="Seno S."/>
            <person name="Sessa L."/>
            <person name="Sheng Y."/>
            <person name="Shibata Y."/>
            <person name="Shimada H."/>
            <person name="Shimada K."/>
            <person name="Silva D."/>
            <person name="Sinclair B."/>
            <person name="Sperling S."/>
            <person name="Stupka E."/>
            <person name="Sugiura K."/>
            <person name="Sultana R."/>
            <person name="Takenaka Y."/>
            <person name="Taki K."/>
            <person name="Tammoja K."/>
            <person name="Tan S.L."/>
            <person name="Tang S."/>
            <person name="Taylor M.S."/>
            <person name="Tegner J."/>
            <person name="Teichmann S.A."/>
            <person name="Ueda H.R."/>
            <person name="van Nimwegen E."/>
            <person name="Verardo R."/>
            <person name="Wei C.L."/>
            <person name="Yagi K."/>
            <person name="Yamanishi H."/>
            <person name="Zabarovsky E."/>
            <person name="Zhu S."/>
            <person name="Zimmer A."/>
            <person name="Hide W."/>
            <person name="Bult C."/>
            <person name="Grimmond S.M."/>
            <person name="Teasdale R.D."/>
            <person name="Liu E.T."/>
            <person name="Brusic V."/>
            <person name="Quackenbush J."/>
            <person name="Wahlestedt C."/>
            <person name="Mattick J.S."/>
            <person name="Hume D.A."/>
            <person name="Kai C."/>
            <person name="Sasaki D."/>
            <person name="Tomaru Y."/>
            <person name="Fukuda S."/>
            <person name="Kanamori-Katayama M."/>
            <person name="Suzuki M."/>
            <person name="Aoki J."/>
            <person name="Arakawa T."/>
            <person name="Iida J."/>
            <person name="Imamura K."/>
            <person name="Itoh M."/>
            <person name="Kato T."/>
            <person name="Kawaji H."/>
            <person name="Kawagashira N."/>
            <person name="Kawashima T."/>
            <person name="Kojima M."/>
            <person name="Kondo S."/>
            <person name="Konno H."/>
            <person name="Nakano K."/>
            <person name="Ninomiya N."/>
            <person name="Nishio T."/>
            <person name="Okada M."/>
            <person name="Plessy C."/>
            <person name="Shibata K."/>
            <person name="Shiraki T."/>
            <person name="Suzuki S."/>
            <person name="Tagami M."/>
            <person name="Waki K."/>
            <person name="Watahiki A."/>
            <person name="Okamura-Oho Y."/>
            <person name="Suzuki H."/>
            <person name="Kawai J."/>
            <person name="Hayashizaki Y."/>
        </authorList>
    </citation>
    <scope>NUCLEOTIDE SEQUENCE [LARGE SCALE MRNA]</scope>
    <source>
        <strain>C57BL/6J</strain>
        <tissue>Hippocampus</tissue>
    </source>
</reference>
<reference key="2">
    <citation type="journal article" date="2004" name="Genome Res.">
        <title>The status, quality, and expansion of the NIH full-length cDNA project: the Mammalian Gene Collection (MGC).</title>
        <authorList>
            <consortium name="The MGC Project Team"/>
        </authorList>
    </citation>
    <scope>NUCLEOTIDE SEQUENCE [LARGE SCALE MRNA]</scope>
    <source>
        <strain>C57BL/6J</strain>
        <tissue>Brain</tissue>
    </source>
</reference>
<reference key="3">
    <citation type="journal article" date="2010" name="Cell">
        <title>A tissue-specific atlas of mouse protein phosphorylation and expression.</title>
        <authorList>
            <person name="Huttlin E.L."/>
            <person name="Jedrychowski M.P."/>
            <person name="Elias J.E."/>
            <person name="Goswami T."/>
            <person name="Rad R."/>
            <person name="Beausoleil S.A."/>
            <person name="Villen J."/>
            <person name="Haas W."/>
            <person name="Sowa M.E."/>
            <person name="Gygi S.P."/>
        </authorList>
    </citation>
    <scope>IDENTIFICATION BY MASS SPECTROMETRY [LARGE SCALE ANALYSIS]</scope>
    <source>
        <tissue>Brain</tissue>
        <tissue>Lung</tissue>
        <tissue>Pancreas</tissue>
        <tissue>Spleen</tissue>
    </source>
</reference>
<reference key="4">
    <citation type="journal article" date="2023" name="Nat. Commun.">
        <title>Prenylcysteine oxidase 1 like protein is required for neutrophil bactericidal activities.</title>
        <authorList>
            <person name="Petenkova A."/>
            <person name="Auger S.A."/>
            <person name="Lamb J."/>
            <person name="Quellier D."/>
            <person name="Carter C."/>
            <person name="To O.T."/>
            <person name="Milosevic J."/>
            <person name="Barghout R."/>
            <person name="Kugadas A."/>
            <person name="Lu X."/>
            <person name="Geddes-McAlister J."/>
            <person name="Fichorova R."/>
            <person name="Sykes D.B."/>
            <person name="Distefano M.D."/>
            <person name="Gadjeva M."/>
        </authorList>
    </citation>
    <scope>FUNCTION</scope>
    <scope>DISRUPTION PHENOTYPE</scope>
</reference>
<dbReference type="EC" id="1.8.3.-"/>
<dbReference type="EMBL" id="AK050006">
    <property type="protein sequence ID" value="BAC34029.1"/>
    <property type="molecule type" value="mRNA"/>
</dbReference>
<dbReference type="EMBL" id="BC060677">
    <property type="protein sequence ID" value="AAH60677.1"/>
    <property type="molecule type" value="mRNA"/>
</dbReference>
<dbReference type="CCDS" id="CCDS29287.1"/>
<dbReference type="RefSeq" id="NP_766420.1">
    <property type="nucleotide sequence ID" value="NM_172832.5"/>
</dbReference>
<dbReference type="SMR" id="Q8C7K6"/>
<dbReference type="FunCoup" id="Q8C7K6">
    <property type="interactions" value="1283"/>
</dbReference>
<dbReference type="STRING" id="10090.ENSMUSP00000025472"/>
<dbReference type="GlyConnect" id="2602">
    <property type="glycosylation" value="1 N-Linked glycan (1 site)"/>
</dbReference>
<dbReference type="GlyCosmos" id="Q8C7K6">
    <property type="glycosylation" value="2 sites, 1 glycan"/>
</dbReference>
<dbReference type="GlyGen" id="Q8C7K6">
    <property type="glycosylation" value="3 sites, 3 N-linked glycans (2 sites)"/>
</dbReference>
<dbReference type="iPTMnet" id="Q8C7K6"/>
<dbReference type="PhosphoSitePlus" id="Q8C7K6"/>
<dbReference type="PaxDb" id="10090-ENSMUSP00000025472"/>
<dbReference type="PeptideAtlas" id="Q8C7K6"/>
<dbReference type="ProteomicsDB" id="287801"/>
<dbReference type="Pumba" id="Q8C7K6"/>
<dbReference type="Antibodypedia" id="27814">
    <property type="antibodies" value="77 antibodies from 18 providers"/>
</dbReference>
<dbReference type="Ensembl" id="ENSMUST00000025472.7">
    <property type="protein sequence ID" value="ENSMUSP00000025472.2"/>
    <property type="gene ID" value="ENSMUSG00000024579.8"/>
</dbReference>
<dbReference type="GeneID" id="240334"/>
<dbReference type="KEGG" id="mmu:240334"/>
<dbReference type="UCSC" id="uc008fcm.1">
    <property type="organism name" value="mouse"/>
</dbReference>
<dbReference type="AGR" id="MGI:3606062"/>
<dbReference type="CTD" id="78991"/>
<dbReference type="MGI" id="MGI:3606062">
    <property type="gene designation" value="Pcyox1l"/>
</dbReference>
<dbReference type="VEuPathDB" id="HostDB:ENSMUSG00000024579"/>
<dbReference type="eggNOG" id="ENOG502QSHJ">
    <property type="taxonomic scope" value="Eukaryota"/>
</dbReference>
<dbReference type="GeneTree" id="ENSGT00390000011206"/>
<dbReference type="HOGENOM" id="CLU_021176_1_0_1"/>
<dbReference type="InParanoid" id="Q8C7K6"/>
<dbReference type="OMA" id="NMWAVEG"/>
<dbReference type="OrthoDB" id="437369at2759"/>
<dbReference type="PhylomeDB" id="Q8C7K6"/>
<dbReference type="TreeFam" id="TF329001"/>
<dbReference type="Reactome" id="R-MMU-114608">
    <property type="pathway name" value="Platelet degranulation"/>
</dbReference>
<dbReference type="BioGRID-ORCS" id="240334">
    <property type="hits" value="2 hits in 79 CRISPR screens"/>
</dbReference>
<dbReference type="ChiTaRS" id="Pcyox1l">
    <property type="organism name" value="mouse"/>
</dbReference>
<dbReference type="PRO" id="PR:Q8C7K6"/>
<dbReference type="Proteomes" id="UP000000589">
    <property type="component" value="Chromosome 18"/>
</dbReference>
<dbReference type="RNAct" id="Q8C7K6">
    <property type="molecule type" value="protein"/>
</dbReference>
<dbReference type="Bgee" id="ENSMUSG00000024579">
    <property type="expression patterns" value="Expressed in lumbar dorsal root ganglion and 119 other cell types or tissues"/>
</dbReference>
<dbReference type="ExpressionAtlas" id="Q8C7K6">
    <property type="expression patterns" value="baseline and differential"/>
</dbReference>
<dbReference type="GO" id="GO:0005576">
    <property type="term" value="C:extracellular region"/>
    <property type="evidence" value="ECO:0007669"/>
    <property type="project" value="UniProtKB-SubCell"/>
</dbReference>
<dbReference type="GO" id="GO:0001735">
    <property type="term" value="F:prenylcysteine oxidase activity"/>
    <property type="evidence" value="ECO:0007669"/>
    <property type="project" value="InterPro"/>
</dbReference>
<dbReference type="GO" id="GO:0070944">
    <property type="term" value="P:neutrophil-mediated killing of bacterium"/>
    <property type="evidence" value="ECO:0000315"/>
    <property type="project" value="UniProtKB"/>
</dbReference>
<dbReference type="GO" id="GO:0030328">
    <property type="term" value="P:prenylcysteine catabolic process"/>
    <property type="evidence" value="ECO:0007669"/>
    <property type="project" value="InterPro"/>
</dbReference>
<dbReference type="FunFam" id="3.50.50.60:FF:000081">
    <property type="entry name" value="prenylcysteine oxidase 1"/>
    <property type="match status" value="1"/>
</dbReference>
<dbReference type="Gene3D" id="3.50.50.60">
    <property type="entry name" value="FAD/NAD(P)-binding domain"/>
    <property type="match status" value="1"/>
</dbReference>
<dbReference type="InterPro" id="IPR036188">
    <property type="entry name" value="FAD/NAD-bd_sf"/>
</dbReference>
<dbReference type="InterPro" id="IPR010795">
    <property type="entry name" value="Prenylcys_lyase"/>
</dbReference>
<dbReference type="InterPro" id="IPR017046">
    <property type="entry name" value="Prenylcysteine_Oxase1"/>
</dbReference>
<dbReference type="PANTHER" id="PTHR15944">
    <property type="entry name" value="FARNESYLCYSTEINE LYASE"/>
    <property type="match status" value="1"/>
</dbReference>
<dbReference type="PANTHER" id="PTHR15944:SF2">
    <property type="entry name" value="PRENYLCYSTEINE OXIDASE-LIKE"/>
    <property type="match status" value="1"/>
</dbReference>
<dbReference type="Pfam" id="PF13450">
    <property type="entry name" value="NAD_binding_8"/>
    <property type="match status" value="1"/>
</dbReference>
<dbReference type="Pfam" id="PF07156">
    <property type="entry name" value="Prenylcys_lyase"/>
    <property type="match status" value="1"/>
</dbReference>
<dbReference type="PIRSF" id="PIRSF036292">
    <property type="entry name" value="Prenylcysteine_oxidase"/>
    <property type="match status" value="1"/>
</dbReference>
<dbReference type="SUPFAM" id="SSF51905">
    <property type="entry name" value="FAD/NAD(P)-binding domain"/>
    <property type="match status" value="1"/>
</dbReference>
<keyword id="KW-0274">FAD</keyword>
<keyword id="KW-0285">Flavoprotein</keyword>
<keyword id="KW-0325">Glycoprotein</keyword>
<keyword id="KW-0560">Oxidoreductase</keyword>
<keyword id="KW-1185">Reference proteome</keyword>
<keyword id="KW-0964">Secreted</keyword>
<keyword id="KW-0732">Signal</keyword>
<proteinExistence type="evidence at protein level"/>
<evidence type="ECO:0000250" key="1">
    <source>
        <dbReference type="UniProtKB" id="Q8NBM8"/>
    </source>
</evidence>
<evidence type="ECO:0000250" key="2">
    <source>
        <dbReference type="UniProtKB" id="Q9UHG3"/>
    </source>
</evidence>
<evidence type="ECO:0000255" key="3"/>
<evidence type="ECO:0000269" key="4">
    <source>
    </source>
</evidence>
<evidence type="ECO:0000305" key="5"/>